<proteinExistence type="evidence at protein level"/>
<organism>
    <name type="scientific">Klebsiella pneumoniae</name>
    <dbReference type="NCBI Taxonomy" id="573"/>
    <lineage>
        <taxon>Bacteria</taxon>
        <taxon>Pseudomonadati</taxon>
        <taxon>Pseudomonadota</taxon>
        <taxon>Gammaproteobacteria</taxon>
        <taxon>Enterobacterales</taxon>
        <taxon>Enterobacteriaceae</taxon>
        <taxon>Klebsiella/Raoultella group</taxon>
        <taxon>Klebsiella</taxon>
        <taxon>Klebsiella pneumoniae complex</taxon>
    </lineage>
</organism>
<dbReference type="EC" id="2.7.7.46" evidence="2"/>
<dbReference type="EMBL" id="X12618">
    <property type="protein sequence ID" value="CAA31139.1"/>
    <property type="molecule type" value="Genomic_DNA"/>
</dbReference>
<dbReference type="EMBL" id="X64368">
    <property type="protein sequence ID" value="CAA45721.1"/>
    <property type="molecule type" value="Genomic_DNA"/>
</dbReference>
<dbReference type="PIR" id="S04170">
    <property type="entry name" value="XNKBGP"/>
</dbReference>
<dbReference type="RefSeq" id="WP_000381802.1">
    <property type="nucleotide sequence ID" value="NZ_WYAL01000060.1"/>
</dbReference>
<dbReference type="RefSeq" id="YP_009022255.1">
    <property type="nucleotide sequence ID" value="NC_023898.1"/>
</dbReference>
<dbReference type="PDB" id="4WQK">
    <property type="method" value="X-ray"/>
    <property type="resolution" value="1.48 A"/>
    <property type="chains" value="A=1-177"/>
</dbReference>
<dbReference type="PDB" id="4WQL">
    <property type="method" value="X-ray"/>
    <property type="resolution" value="1.73 A"/>
    <property type="chains" value="A=1-177"/>
</dbReference>
<dbReference type="PDB" id="5KQJ">
    <property type="method" value="NMR"/>
    <property type="chains" value="A=1-177"/>
</dbReference>
<dbReference type="PDBsum" id="4WQK"/>
<dbReference type="PDBsum" id="4WQL"/>
<dbReference type="PDBsum" id="5KQJ"/>
<dbReference type="SMR" id="P0AE05"/>
<dbReference type="BindingDB" id="P0AE05"/>
<dbReference type="GeneID" id="97221509"/>
<dbReference type="BRENDA" id="2.7.7.46">
    <property type="organism ID" value="2814"/>
</dbReference>
<dbReference type="EvolutionaryTrace" id="P0AE05"/>
<dbReference type="PRO" id="PR:P0AE05"/>
<dbReference type="GO" id="GO:0008871">
    <property type="term" value="F:aminoglycoside 2''-nucleotidyltransferase activity"/>
    <property type="evidence" value="ECO:0007669"/>
    <property type="project" value="UniProtKB-EC"/>
</dbReference>
<dbReference type="GO" id="GO:0046872">
    <property type="term" value="F:metal ion binding"/>
    <property type="evidence" value="ECO:0007669"/>
    <property type="project" value="UniProtKB-KW"/>
</dbReference>
<dbReference type="GO" id="GO:0046677">
    <property type="term" value="P:response to antibiotic"/>
    <property type="evidence" value="ECO:0007669"/>
    <property type="project" value="UniProtKB-KW"/>
</dbReference>
<dbReference type="Gene3D" id="3.30.460.40">
    <property type="match status" value="1"/>
</dbReference>
<dbReference type="InterPro" id="IPR019646">
    <property type="entry name" value="Aminoglyc_AdlTrfase"/>
</dbReference>
<dbReference type="NCBIfam" id="NF000064">
    <property type="entry name" value="ANT_2pp_Ia"/>
    <property type="match status" value="1"/>
</dbReference>
<dbReference type="Pfam" id="PF10706">
    <property type="entry name" value="Aminoglyc_resit"/>
    <property type="match status" value="1"/>
</dbReference>
<gene>
    <name evidence="6" type="primary">aadB</name>
</gene>
<reference key="1">
    <citation type="journal article" date="1988" name="Mol. Microbiol.">
        <title>Nucleotide sequence analysis of 2''-aminoglycoside nucleotidyl-transferase ANT(2'') from Tn4000: its relationship with AAD(3'') and impact on Tn21 evolution.</title>
        <authorList>
            <person name="Schmidt F.R.J."/>
            <person name="Nuecken E.J."/>
            <person name="Henschke R.B."/>
        </authorList>
    </citation>
    <scope>NUCLEOTIDE SEQUENCE [GENOMIC DNA]</scope>
    <source>
        <strain>18440</strain>
        <plasmid>pBP201</plasmid>
        <transposon>Tn4000</transposon>
    </source>
</reference>
<reference key="2">
    <citation type="submission" date="1992-02" db="EMBL/GenBank/DDBJ databases">
        <title>Molecular characterization and comparison of the regions encoding gentamicin resistance (aadB) in pBW1 and pLST1000 and their relationship to Tn21 family of transposons and elements.</title>
        <authorList>
            <person name="Zieg J."/>
            <person name="Jiang H."/>
            <person name="McCabe F."/>
            <person name="O'Brien T."/>
        </authorList>
    </citation>
    <scope>NUCLEOTIDE SEQUENCE [GENOMIC DNA]</scope>
    <source>
        <plasmid>IncM pBWH1</plasmid>
    </source>
</reference>
<reference evidence="9 10" key="3">
    <citation type="journal article" date="2015" name="MBio">
        <title>Structural and molecular basis for resistance to aminoglycoside antibiotics by the adenylyltransferase ANT(2)-Ia.</title>
        <authorList>
            <person name="Cox G."/>
            <person name="Stogios P.J."/>
            <person name="Savchenko A."/>
            <person name="Wright G.D."/>
        </authorList>
    </citation>
    <scope>X-RAY CRYSTALLOGRAPHY (1.48 ANGSTROMS) IN COMPLEX WITH MAGNESIUM WITH AND WITHOUT ANTIBIOTIC</scope>
    <scope>FUNCTION</scope>
    <scope>CATALYTIC ACTIVITY</scope>
    <scope>ACTIVE SITE</scope>
    <scope>POSSIBLE REACTION MECHANISM</scope>
    <scope>BIOPHYSICOCHEMICAL PROPERTIES</scope>
    <scope>SUBUNIT</scope>
    <scope>DOMAIN</scope>
    <scope>MUTAGENESIS OF ARG-40; HIS-42; ASP-46 AND ASP-86</scope>
</reference>
<reference evidence="11" key="4">
    <citation type="journal article" date="2017" name="Protein Sci.">
        <title>Effect of solvent and protein dynamics in ligand recognition and inhibition of aminoglycoside adenyltransferase 2-Ia.</title>
        <authorList>
            <person name="Bacot-Davis V.R."/>
            <person name="Bassenden A.V."/>
            <person name="Sprules T."/>
            <person name="Berghuis A.M."/>
        </authorList>
    </citation>
    <scope>STRUCTURE BY NMR</scope>
    <scope>FUNCTION</scope>
    <scope>SUBUNIT</scope>
    <scope>DOMAIN</scope>
    <scope>MUTAGENESIS OF ASP-44; ILE-129 AND TYR-135</scope>
</reference>
<accession>P0AE05</accession>
<accession>P08880</accession>
<accession>P10019</accession>
<evidence type="ECO:0000269" key="1">
    <source>
    </source>
</evidence>
<evidence type="ECO:0000269" key="2">
    <source>
    </source>
</evidence>
<evidence type="ECO:0000269" key="3">
    <source>
    </source>
</evidence>
<evidence type="ECO:0000269" key="4">
    <source ref="2"/>
</evidence>
<evidence type="ECO:0000303" key="5">
    <source>
    </source>
</evidence>
<evidence type="ECO:0000303" key="6">
    <source>
    </source>
</evidence>
<evidence type="ECO:0000303" key="7">
    <source>
    </source>
</evidence>
<evidence type="ECO:0000305" key="8">
    <source>
    </source>
</evidence>
<evidence type="ECO:0007744" key="9">
    <source>
        <dbReference type="PDB" id="4WQK"/>
    </source>
</evidence>
<evidence type="ECO:0007744" key="10">
    <source>
        <dbReference type="PDB" id="4WQL"/>
    </source>
</evidence>
<evidence type="ECO:0007744" key="11">
    <source>
        <dbReference type="PDB" id="5KQJ"/>
    </source>
</evidence>
<evidence type="ECO:0007829" key="12">
    <source>
        <dbReference type="PDB" id="4WQK"/>
    </source>
</evidence>
<feature type="chain" id="PRO_0000068557" description="2''-aminoglycoside nucleotidyltransferase">
    <location>
        <begin position="1"/>
        <end position="177"/>
    </location>
</feature>
<feature type="region of interest" description="N-terminal domain" evidence="1 3">
    <location>
        <begin position="1"/>
        <end position="92"/>
    </location>
</feature>
<feature type="region of interest" description="C-terminal domain" evidence="1 3">
    <location>
        <begin position="93"/>
        <end position="177"/>
    </location>
</feature>
<feature type="active site" description="Proton acceptor" evidence="8">
    <location>
        <position position="86"/>
    </location>
</feature>
<feature type="binding site" evidence="1 9 10">
    <location>
        <position position="44"/>
    </location>
    <ligand>
        <name>Mg(2+)</name>
        <dbReference type="ChEBI" id="CHEBI:18420"/>
        <label>1</label>
    </ligand>
</feature>
<feature type="binding site" evidence="1 9 10">
    <location>
        <position position="44"/>
    </location>
    <ligand>
        <name>Mg(2+)</name>
        <dbReference type="ChEBI" id="CHEBI:18420"/>
        <label>2</label>
    </ligand>
</feature>
<feature type="binding site" evidence="1 9 10">
    <location>
        <position position="46"/>
    </location>
    <ligand>
        <name>Mg(2+)</name>
        <dbReference type="ChEBI" id="CHEBI:18420"/>
        <label>1</label>
    </ligand>
</feature>
<feature type="binding site" evidence="1 9 10">
    <location>
        <position position="46"/>
    </location>
    <ligand>
        <name>Mg(2+)</name>
        <dbReference type="ChEBI" id="CHEBI:18420"/>
        <label>2</label>
    </ligand>
</feature>
<feature type="binding site" evidence="1 9 10">
    <location>
        <position position="86"/>
    </location>
    <ligand>
        <name>Mg(2+)</name>
        <dbReference type="ChEBI" id="CHEBI:18420"/>
        <label>2</label>
    </ligand>
</feature>
<feature type="binding site" evidence="1 10">
    <location>
        <position position="100"/>
    </location>
    <ligand>
        <name>kanamycin A</name>
        <dbReference type="ChEBI" id="CHEBI:58214"/>
    </ligand>
</feature>
<feature type="mutagenesis site" description="Decreased kcat, decreased affinity for ATP." evidence="1">
    <original>R</original>
    <variation>A</variation>
    <location>
        <position position="40"/>
    </location>
</feature>
<feature type="mutagenesis site" description="Loss of activity." evidence="1">
    <original>H</original>
    <variation>A</variation>
    <location>
        <position position="42"/>
    </location>
</feature>
<feature type="mutagenesis site" description="4-fold reduction in tobramycin modification." evidence="3">
    <original>D</original>
    <variation>A</variation>
    <location>
        <position position="44"/>
    </location>
</feature>
<feature type="mutagenesis site" description="Loss of activity." evidence="1">
    <original>D</original>
    <variation>A</variation>
    <location>
        <position position="46"/>
    </location>
</feature>
<feature type="mutagenesis site" description="Loss of activity." evidence="1">
    <original>D</original>
    <variation>A</variation>
    <location>
        <position position="86"/>
    </location>
</feature>
<feature type="mutagenesis site" description="3-fold reduction in tobramycin modification." evidence="3">
    <original>I</original>
    <variation>A</variation>
    <location>
        <position position="129"/>
    </location>
</feature>
<feature type="mutagenesis site" description="Small decrease in tobramycin modification." evidence="3">
    <original>Y</original>
    <variation>A</variation>
    <location>
        <position position="135"/>
    </location>
</feature>
<feature type="helix" evidence="12">
    <location>
        <begin position="4"/>
        <end position="18"/>
    </location>
</feature>
<feature type="helix" evidence="12">
    <location>
        <begin position="27"/>
        <end position="35"/>
    </location>
</feature>
<feature type="strand" evidence="12">
    <location>
        <begin position="43"/>
        <end position="50"/>
    </location>
</feature>
<feature type="helix" evidence="12">
    <location>
        <begin position="51"/>
        <end position="53"/>
    </location>
</feature>
<feature type="helix" evidence="12">
    <location>
        <begin position="54"/>
        <end position="63"/>
    </location>
</feature>
<feature type="strand" evidence="12">
    <location>
        <begin position="67"/>
        <end position="72"/>
    </location>
</feature>
<feature type="strand" evidence="12">
    <location>
        <begin position="75"/>
        <end position="80"/>
    </location>
</feature>
<feature type="strand" evidence="12">
    <location>
        <begin position="83"/>
        <end position="92"/>
    </location>
</feature>
<feature type="strand" evidence="12">
    <location>
        <begin position="94"/>
        <end position="98"/>
    </location>
</feature>
<feature type="strand" evidence="12">
    <location>
        <begin position="113"/>
        <end position="115"/>
    </location>
</feature>
<feature type="strand" evidence="12">
    <location>
        <begin position="118"/>
        <end position="120"/>
    </location>
</feature>
<feature type="helix" evidence="12">
    <location>
        <begin position="125"/>
        <end position="138"/>
    </location>
</feature>
<feature type="helix" evidence="12">
    <location>
        <begin position="141"/>
        <end position="143"/>
    </location>
</feature>
<feature type="helix" evidence="12">
    <location>
        <begin position="146"/>
        <end position="159"/>
    </location>
</feature>
<feature type="helix" evidence="12">
    <location>
        <begin position="161"/>
        <end position="175"/>
    </location>
</feature>
<sequence length="177" mass="19873">MDTTQVTLIHKILAAADERNLPLWIGGGWAIDARLGRVTRKHDDIDLTFPGERRGELEAIVEMLGGRVMEELDYGFLAEIGDELLDCEPAWWADEAYEIAEAPQGSCPEAAEGVIAGRPVRCNSWEAIIWDYFYYADEVPPVDWPTKHIESYRLACTSLGAEKVEVLRAAFRSRYAA</sequence>
<protein>
    <recommendedName>
        <fullName evidence="6">2''-aminoglycoside nucleotidyltransferase</fullName>
        <ecNumber evidence="2">2.7.7.46</ecNumber>
    </recommendedName>
    <alternativeName>
        <fullName>AAD(2'')</fullName>
    </alternativeName>
    <alternativeName>
        <fullName evidence="7">Aminoglycoside adenyltransferase 2''-Ia</fullName>
        <shortName evidence="5">ANT(2'')-Ia</shortName>
    </alternativeName>
    <alternativeName>
        <fullName>Gentamicin 2''-nucleotidyltransferase</fullName>
    </alternativeName>
    <alternativeName>
        <fullName>Gentamicin resistance protein</fullName>
    </alternativeName>
</protein>
<name>AADB1_KLEPN</name>
<geneLocation type="plasmid">
    <name>pBP201</name>
</geneLocation>
<geneLocation type="plasmid">
    <name>IncM pBWH1</name>
</geneLocation>
<keyword id="KW-0002">3D-structure</keyword>
<keyword id="KW-0046">Antibiotic resistance</keyword>
<keyword id="KW-0460">Magnesium</keyword>
<keyword id="KW-0479">Metal-binding</keyword>
<keyword id="KW-0548">Nucleotidyltransferase</keyword>
<keyword id="KW-0614">Plasmid</keyword>
<keyword id="KW-0808">Transferase</keyword>
<keyword id="KW-0814">Transposable element</keyword>
<comment type="function">
    <text evidence="1 2 4">Mediates bacterial resistance to kanamycin, gentamicin, dibekacin, sisomicin and tobramycin by adenylating the 2''-hydroxyl group of these antibiotics.</text>
</comment>
<comment type="catalytic activity">
    <reaction evidence="2 8">
        <text>nucleoside triphosphate + gentamicin = diphosphate + 2''-nucleotidylgentamicin.</text>
        <dbReference type="EC" id="2.7.7.46"/>
    </reaction>
</comment>
<comment type="cofactor">
    <cofactor evidence="1 9 10">
        <name>Mg(2+)</name>
        <dbReference type="ChEBI" id="CHEBI:18420"/>
    </cofactor>
    <text evidence="1">Binds 2 Mg(2+).</text>
</comment>
<comment type="biophysicochemical properties">
    <kinetics>
        <KM evidence="1">23.9 uM for kanamycin B</KM>
        <KM evidence="1">35 uM for ATP</KM>
        <text evidence="1">kcat is 15.3 sec(-1) for ATP and 5.2 sec(-1) for kanamycin B.</text>
    </kinetics>
</comment>
<comment type="subunit">
    <text evidence="1 3">Monomer.</text>
</comment>
<comment type="domain">
    <text evidence="1 3">Has an N- and C-terminal domain; kanamycin binds in the cleft between the 2 domains.</text>
</comment>